<feature type="chain" id="PRO_0000143214" description="Maturase K">
    <location>
        <begin position="1"/>
        <end position="517"/>
    </location>
</feature>
<reference key="1">
    <citation type="journal article" date="2005" name="J. Plant Res.">
        <title>Molecular phylogenetics of subtribe Aeridinae (Orchidaceae): insights from plastid matK and nuclear ribosomal ITS sequences.</title>
        <authorList>
            <person name="Topik H."/>
            <person name="Yukawa T."/>
            <person name="Ito M."/>
        </authorList>
    </citation>
    <scope>NUCLEOTIDE SEQUENCE [GENOMIC DNA]</scope>
</reference>
<sequence length="517" mass="62040">MYLNSRITRIFRLKKERFWQQNFLYPLLLQEYLYSLAHYHSFNSLIFYEPVEIIGYDNKSSLVLVKRLITQMYQQKSFISSVNDSNQNGFSLHKNSFSYHFYSQMVSEGFGVILEISFSSRLVSSLEEKRIPKSQNLRSIHSIFPFLEDKLSHLNYVSDLLIPYPIHLGILVQILQCWIKDVSSSHLLRLIFHEYHNLNRDIPSKKSIYVLSKERRRFFWFLHNFYVYGCEYIFLYRRKQSSYLRSISSGVFLERTHFYGKIGYLRVVSCYSFQRILWFLKDIFIHYVRYQGKAILASKGTFFLMNKWKFHFVNFWQSYFHFWFQPYRIHIKQLPNYSFSFLGYFSSVLKNPLVVRNQMLENSFLINTLTNKLDTIAPVIFLIGSLSKAQFCTVLGHPISKPIWTNLSDSDILDRFCRICRNLSRYHSGSSKKHILYRIKYILRFTCARTLARKHKSTVRMFMLRLGSVFLEESFLEDEQSLSLIFLHNIPFLLHRLHRERIGYLDIIRMNDLMDHS</sequence>
<organism>
    <name type="scientific">Phalaenopsis japonica</name>
    <name type="common">Orchid</name>
    <name type="synonym">Sedirea japonica</name>
    <dbReference type="NCBI Taxonomy" id="111597"/>
    <lineage>
        <taxon>Eukaryota</taxon>
        <taxon>Viridiplantae</taxon>
        <taxon>Streptophyta</taxon>
        <taxon>Embryophyta</taxon>
        <taxon>Tracheophyta</taxon>
        <taxon>Spermatophyta</taxon>
        <taxon>Magnoliopsida</taxon>
        <taxon>Liliopsida</taxon>
        <taxon>Asparagales</taxon>
        <taxon>Orchidaceae</taxon>
        <taxon>Epidendroideae</taxon>
        <taxon>Vandeae</taxon>
        <taxon>Aeridinae</taxon>
        <taxon>Phalaenopsis</taxon>
    </lineage>
</organism>
<dbReference type="EMBL" id="AB217761">
    <property type="protein sequence ID" value="BAE45679.1"/>
    <property type="molecule type" value="Genomic_DNA"/>
</dbReference>
<dbReference type="GO" id="GO:0009507">
    <property type="term" value="C:chloroplast"/>
    <property type="evidence" value="ECO:0007669"/>
    <property type="project" value="UniProtKB-SubCell"/>
</dbReference>
<dbReference type="GO" id="GO:0003723">
    <property type="term" value="F:RNA binding"/>
    <property type="evidence" value="ECO:0007669"/>
    <property type="project" value="UniProtKB-KW"/>
</dbReference>
<dbReference type="GO" id="GO:0006397">
    <property type="term" value="P:mRNA processing"/>
    <property type="evidence" value="ECO:0007669"/>
    <property type="project" value="UniProtKB-KW"/>
</dbReference>
<dbReference type="GO" id="GO:0008380">
    <property type="term" value="P:RNA splicing"/>
    <property type="evidence" value="ECO:0007669"/>
    <property type="project" value="UniProtKB-UniRule"/>
</dbReference>
<dbReference type="GO" id="GO:0008033">
    <property type="term" value="P:tRNA processing"/>
    <property type="evidence" value="ECO:0007669"/>
    <property type="project" value="UniProtKB-KW"/>
</dbReference>
<dbReference type="HAMAP" id="MF_01390">
    <property type="entry name" value="MatK"/>
    <property type="match status" value="1"/>
</dbReference>
<dbReference type="InterPro" id="IPR024937">
    <property type="entry name" value="Domain_X"/>
</dbReference>
<dbReference type="InterPro" id="IPR002866">
    <property type="entry name" value="Maturase_MatK"/>
</dbReference>
<dbReference type="InterPro" id="IPR024942">
    <property type="entry name" value="Maturase_MatK_N"/>
</dbReference>
<dbReference type="PANTHER" id="PTHR34811">
    <property type="entry name" value="MATURASE K"/>
    <property type="match status" value="1"/>
</dbReference>
<dbReference type="PANTHER" id="PTHR34811:SF1">
    <property type="entry name" value="MATURASE K"/>
    <property type="match status" value="1"/>
</dbReference>
<dbReference type="Pfam" id="PF01348">
    <property type="entry name" value="Intron_maturas2"/>
    <property type="match status" value="1"/>
</dbReference>
<dbReference type="Pfam" id="PF01824">
    <property type="entry name" value="MatK_N"/>
    <property type="match status" value="1"/>
</dbReference>
<evidence type="ECO:0000255" key="1">
    <source>
        <dbReference type="HAMAP-Rule" id="MF_01390"/>
    </source>
</evidence>
<gene>
    <name evidence="1" type="primary">matK</name>
</gene>
<accession>Q3LFX6</accession>
<geneLocation type="chloroplast"/>
<keyword id="KW-0150">Chloroplast</keyword>
<keyword id="KW-0507">mRNA processing</keyword>
<keyword id="KW-0934">Plastid</keyword>
<keyword id="KW-0694">RNA-binding</keyword>
<keyword id="KW-0819">tRNA processing</keyword>
<name>MATK_PHAJD</name>
<protein>
    <recommendedName>
        <fullName evidence="1">Maturase K</fullName>
    </recommendedName>
    <alternativeName>
        <fullName evidence="1">Intron maturase</fullName>
    </alternativeName>
</protein>
<comment type="function">
    <text evidence="1">Usually encoded in the trnK tRNA gene intron. Probably assists in splicing its own and other chloroplast group II introns.</text>
</comment>
<comment type="subcellular location">
    <subcellularLocation>
        <location>Plastid</location>
        <location>Chloroplast</location>
    </subcellularLocation>
</comment>
<comment type="similarity">
    <text evidence="1">Belongs to the intron maturase 2 family. MatK subfamily.</text>
</comment>
<proteinExistence type="inferred from homology"/>